<sequence>MLVLVINSGSSSLKYQLRELADDGADGPRPVLAKGLVERIGVPGSDVPDHAAALERVEAEVFRVIGDRPIDAAGHRVVHGGERFTAAALVTNEVIRAIERLAPLAPLHNPAAAQGLRAMTERYPDMPQVVVFDTSFHQTMPREAWQYALPESVYREHGIRRYGFHGTSHDLVAGMAARHLGVAREEFSGIVLHLGNGASATAIRDGASVDTSMGFTPLAGLVMGTRTGDLDPSVVTHLMRTQGRSAEEMDTLMNKESGLLGLAGHADMRQVVEAADAGDRRARTALDVASYRLAKYVGGYHVAVGGAQAIVFTAGIGENSAPFRARVVQRLGALGVELDAAANEAGLSGAGDDGVAVISAPGSAIPVLVIPTDEEQAIARLTWELTRG</sequence>
<protein>
    <recommendedName>
        <fullName evidence="1">Acetate kinase</fullName>
        <ecNumber evidence="1">2.7.2.1</ecNumber>
    </recommendedName>
    <alternativeName>
        <fullName evidence="1">Acetokinase</fullName>
    </alternativeName>
</protein>
<comment type="function">
    <text evidence="1">Catalyzes the formation of acetyl phosphate from acetate and ATP. Can also catalyze the reverse reaction.</text>
</comment>
<comment type="catalytic activity">
    <reaction evidence="1">
        <text>acetate + ATP = acetyl phosphate + ADP</text>
        <dbReference type="Rhea" id="RHEA:11352"/>
        <dbReference type="ChEBI" id="CHEBI:22191"/>
        <dbReference type="ChEBI" id="CHEBI:30089"/>
        <dbReference type="ChEBI" id="CHEBI:30616"/>
        <dbReference type="ChEBI" id="CHEBI:456216"/>
        <dbReference type="EC" id="2.7.2.1"/>
    </reaction>
</comment>
<comment type="cofactor">
    <cofactor evidence="1">
        <name>Mg(2+)</name>
        <dbReference type="ChEBI" id="CHEBI:18420"/>
    </cofactor>
    <cofactor evidence="1">
        <name>Mn(2+)</name>
        <dbReference type="ChEBI" id="CHEBI:29035"/>
    </cofactor>
    <text evidence="1">Mg(2+). Can also accept Mn(2+).</text>
</comment>
<comment type="pathway">
    <text evidence="1">Metabolic intermediate biosynthesis; acetyl-CoA biosynthesis; acetyl-CoA from acetate: step 1/2.</text>
</comment>
<comment type="subunit">
    <text evidence="1">Homodimer.</text>
</comment>
<comment type="subcellular location">
    <subcellularLocation>
        <location evidence="1">Cytoplasm</location>
    </subcellularLocation>
</comment>
<comment type="similarity">
    <text evidence="1">Belongs to the acetokinase family.</text>
</comment>
<reference key="1">
    <citation type="journal article" date="2010" name="J. Bacteriol.">
        <title>Genome sequence of the Fleming strain of Micrococcus luteus, a simple free-living actinobacterium.</title>
        <authorList>
            <person name="Young M."/>
            <person name="Artsatbanov V."/>
            <person name="Beller H.R."/>
            <person name="Chandra G."/>
            <person name="Chater K.F."/>
            <person name="Dover L.G."/>
            <person name="Goh E.B."/>
            <person name="Kahan T."/>
            <person name="Kaprelyants A.S."/>
            <person name="Kyrpides N."/>
            <person name="Lapidus A."/>
            <person name="Lowry S.R."/>
            <person name="Lykidis A."/>
            <person name="Mahillon J."/>
            <person name="Markowitz V."/>
            <person name="Mavromatis K."/>
            <person name="Mukamolova G.V."/>
            <person name="Oren A."/>
            <person name="Rokem J.S."/>
            <person name="Smith M.C."/>
            <person name="Young D.I."/>
            <person name="Greenblatt C.L."/>
        </authorList>
    </citation>
    <scope>NUCLEOTIDE SEQUENCE [LARGE SCALE GENOMIC DNA]</scope>
    <source>
        <strain>ATCC 4698 / DSM 20030 / JCM 1464 / CCM 169 / CCUG 5858 / IAM 1056 / NBRC 3333 / NCIMB 9278 / NCTC 2665 / VKM Ac-2230</strain>
    </source>
</reference>
<organism>
    <name type="scientific">Micrococcus luteus (strain ATCC 4698 / DSM 20030 / JCM 1464 / CCM 169 / CCUG 5858 / IAM 1056 / NBRC 3333 / NCIMB 9278 / NCTC 2665 / VKM Ac-2230)</name>
    <name type="common">Micrococcus lysodeikticus</name>
    <dbReference type="NCBI Taxonomy" id="465515"/>
    <lineage>
        <taxon>Bacteria</taxon>
        <taxon>Bacillati</taxon>
        <taxon>Actinomycetota</taxon>
        <taxon>Actinomycetes</taxon>
        <taxon>Micrococcales</taxon>
        <taxon>Micrococcaceae</taxon>
        <taxon>Micrococcus</taxon>
    </lineage>
</organism>
<accession>C5C8D9</accession>
<keyword id="KW-0067">ATP-binding</keyword>
<keyword id="KW-0963">Cytoplasm</keyword>
<keyword id="KW-0418">Kinase</keyword>
<keyword id="KW-0460">Magnesium</keyword>
<keyword id="KW-0479">Metal-binding</keyword>
<keyword id="KW-0547">Nucleotide-binding</keyword>
<keyword id="KW-1185">Reference proteome</keyword>
<keyword id="KW-0808">Transferase</keyword>
<feature type="chain" id="PRO_1000201907" description="Acetate kinase">
    <location>
        <begin position="1"/>
        <end position="388"/>
    </location>
</feature>
<feature type="active site" description="Proton donor/acceptor" evidence="1">
    <location>
        <position position="133"/>
    </location>
</feature>
<feature type="binding site" evidence="1">
    <location>
        <position position="7"/>
    </location>
    <ligand>
        <name>Mg(2+)</name>
        <dbReference type="ChEBI" id="CHEBI:18420"/>
    </ligand>
</feature>
<feature type="binding site" evidence="1">
    <location>
        <position position="14"/>
    </location>
    <ligand>
        <name>ATP</name>
        <dbReference type="ChEBI" id="CHEBI:30616"/>
    </ligand>
</feature>
<feature type="binding site" evidence="1">
    <location>
        <position position="76"/>
    </location>
    <ligand>
        <name>substrate</name>
    </ligand>
</feature>
<feature type="binding site" evidence="1">
    <location>
        <begin position="193"/>
        <end position="197"/>
    </location>
    <ligand>
        <name>ATP</name>
        <dbReference type="ChEBI" id="CHEBI:30616"/>
    </ligand>
</feature>
<feature type="binding site" evidence="1">
    <location>
        <begin position="267"/>
        <end position="269"/>
    </location>
    <ligand>
        <name>ATP</name>
        <dbReference type="ChEBI" id="CHEBI:30616"/>
    </ligand>
</feature>
<feature type="binding site" evidence="1">
    <location>
        <begin position="315"/>
        <end position="319"/>
    </location>
    <ligand>
        <name>ATP</name>
        <dbReference type="ChEBI" id="CHEBI:30616"/>
    </ligand>
</feature>
<feature type="binding site" evidence="1">
    <location>
        <position position="374"/>
    </location>
    <ligand>
        <name>Mg(2+)</name>
        <dbReference type="ChEBI" id="CHEBI:18420"/>
    </ligand>
</feature>
<feature type="site" description="Transition state stabilizer" evidence="1">
    <location>
        <position position="165"/>
    </location>
</feature>
<feature type="site" description="Transition state stabilizer" evidence="1">
    <location>
        <position position="226"/>
    </location>
</feature>
<evidence type="ECO:0000255" key="1">
    <source>
        <dbReference type="HAMAP-Rule" id="MF_00020"/>
    </source>
</evidence>
<dbReference type="EC" id="2.7.2.1" evidence="1"/>
<dbReference type="EMBL" id="CP001628">
    <property type="protein sequence ID" value="ACS29741.1"/>
    <property type="molecule type" value="Genomic_DNA"/>
</dbReference>
<dbReference type="RefSeq" id="WP_010079622.1">
    <property type="nucleotide sequence ID" value="NC_012803.1"/>
</dbReference>
<dbReference type="SMR" id="C5C8D9"/>
<dbReference type="STRING" id="465515.Mlut_01770"/>
<dbReference type="EnsemblBacteria" id="ACS29741">
    <property type="protein sequence ID" value="ACS29741"/>
    <property type="gene ID" value="Mlut_01770"/>
</dbReference>
<dbReference type="GeneID" id="93344358"/>
<dbReference type="KEGG" id="mlu:Mlut_01770"/>
<dbReference type="PATRIC" id="fig|465515.4.peg.155"/>
<dbReference type="eggNOG" id="COG0282">
    <property type="taxonomic scope" value="Bacteria"/>
</dbReference>
<dbReference type="HOGENOM" id="CLU_020352_0_1_11"/>
<dbReference type="UniPathway" id="UPA00340">
    <property type="reaction ID" value="UER00458"/>
</dbReference>
<dbReference type="Proteomes" id="UP000000738">
    <property type="component" value="Chromosome"/>
</dbReference>
<dbReference type="GO" id="GO:0005737">
    <property type="term" value="C:cytoplasm"/>
    <property type="evidence" value="ECO:0007669"/>
    <property type="project" value="UniProtKB-SubCell"/>
</dbReference>
<dbReference type="GO" id="GO:0008776">
    <property type="term" value="F:acetate kinase activity"/>
    <property type="evidence" value="ECO:0007669"/>
    <property type="project" value="UniProtKB-UniRule"/>
</dbReference>
<dbReference type="GO" id="GO:0005524">
    <property type="term" value="F:ATP binding"/>
    <property type="evidence" value="ECO:0007669"/>
    <property type="project" value="UniProtKB-KW"/>
</dbReference>
<dbReference type="GO" id="GO:0000287">
    <property type="term" value="F:magnesium ion binding"/>
    <property type="evidence" value="ECO:0007669"/>
    <property type="project" value="UniProtKB-UniRule"/>
</dbReference>
<dbReference type="GO" id="GO:0006083">
    <property type="term" value="P:acetate metabolic process"/>
    <property type="evidence" value="ECO:0007669"/>
    <property type="project" value="TreeGrafter"/>
</dbReference>
<dbReference type="GO" id="GO:0006085">
    <property type="term" value="P:acetyl-CoA biosynthetic process"/>
    <property type="evidence" value="ECO:0007669"/>
    <property type="project" value="UniProtKB-UniRule"/>
</dbReference>
<dbReference type="CDD" id="cd24010">
    <property type="entry name" value="ASKHA_NBD_AcK_PK"/>
    <property type="match status" value="1"/>
</dbReference>
<dbReference type="Gene3D" id="3.30.420.40">
    <property type="match status" value="2"/>
</dbReference>
<dbReference type="HAMAP" id="MF_00020">
    <property type="entry name" value="Acetate_kinase"/>
    <property type="match status" value="1"/>
</dbReference>
<dbReference type="InterPro" id="IPR004372">
    <property type="entry name" value="Ac/propionate_kinase"/>
</dbReference>
<dbReference type="InterPro" id="IPR000890">
    <property type="entry name" value="Aliphatic_acid_kin_short-chain"/>
</dbReference>
<dbReference type="InterPro" id="IPR023865">
    <property type="entry name" value="Aliphatic_acid_kinase_CS"/>
</dbReference>
<dbReference type="InterPro" id="IPR043129">
    <property type="entry name" value="ATPase_NBD"/>
</dbReference>
<dbReference type="NCBIfam" id="TIGR00016">
    <property type="entry name" value="ackA"/>
    <property type="match status" value="1"/>
</dbReference>
<dbReference type="PANTHER" id="PTHR21060">
    <property type="entry name" value="ACETATE KINASE"/>
    <property type="match status" value="1"/>
</dbReference>
<dbReference type="PANTHER" id="PTHR21060:SF15">
    <property type="entry name" value="ACETATE KINASE-RELATED"/>
    <property type="match status" value="1"/>
</dbReference>
<dbReference type="Pfam" id="PF00871">
    <property type="entry name" value="Acetate_kinase"/>
    <property type="match status" value="1"/>
</dbReference>
<dbReference type="PIRSF" id="PIRSF000722">
    <property type="entry name" value="Acetate_prop_kin"/>
    <property type="match status" value="1"/>
</dbReference>
<dbReference type="PRINTS" id="PR00471">
    <property type="entry name" value="ACETATEKNASE"/>
</dbReference>
<dbReference type="SUPFAM" id="SSF53067">
    <property type="entry name" value="Actin-like ATPase domain"/>
    <property type="match status" value="2"/>
</dbReference>
<dbReference type="PROSITE" id="PS01075">
    <property type="entry name" value="ACETATE_KINASE_1"/>
    <property type="match status" value="1"/>
</dbReference>
<gene>
    <name evidence="1" type="primary">ackA</name>
    <name type="ordered locus">Mlut_01770</name>
</gene>
<name>ACKA_MICLC</name>
<proteinExistence type="inferred from homology"/>